<organism>
    <name type="scientific">Streptococcus pyogenes serotype M3 (strain ATCC BAA-595 / MGAS315)</name>
    <dbReference type="NCBI Taxonomy" id="198466"/>
    <lineage>
        <taxon>Bacteria</taxon>
        <taxon>Bacillati</taxon>
        <taxon>Bacillota</taxon>
        <taxon>Bacilli</taxon>
        <taxon>Lactobacillales</taxon>
        <taxon>Streptococcaceae</taxon>
        <taxon>Streptococcus</taxon>
    </lineage>
</organism>
<keyword id="KW-0175">Coiled coil</keyword>
<keyword id="KW-0238">DNA-binding</keyword>
<keyword id="KW-0804">Transcription</keyword>
<keyword id="KW-0805">Transcription regulation</keyword>
<name>GREA_STRP3</name>
<gene>
    <name evidence="1" type="primary">greA</name>
    <name type="ordered locus">SpyM3_0255</name>
</gene>
<sequence length="160" mass="17653">MAEKTYPMTLTEKEQLEKELEELKLVRRPEIVERIKIARSYGDLSENSEYDAAKDEQAFVEGQISTLETKIRYAEIIDSDAVAKDEVAIGKTVIVQEVGTTDKDTYHIVGAAGADIFSGKISNESPIAQALIGKKTGDKVRIESPAATYDVEIISVEKTN</sequence>
<comment type="function">
    <text evidence="1">Necessary for efficient RNA polymerase transcription elongation past template-encoded arresting sites. The arresting sites in DNA have the property of trapping a certain fraction of elongating RNA polymerases that pass through, resulting in locked ternary complexes. Cleavage of the nascent transcript by cleavage factors such as GreA or GreB allows the resumption of elongation from the new 3'terminus. GreA releases sequences of 2 to 3 nucleotides.</text>
</comment>
<comment type="similarity">
    <text evidence="1">Belongs to the GreA/GreB family.</text>
</comment>
<protein>
    <recommendedName>
        <fullName evidence="1">Transcription elongation factor GreA</fullName>
    </recommendedName>
    <alternativeName>
        <fullName evidence="1">Transcript cleavage factor GreA</fullName>
    </alternativeName>
</protein>
<proteinExistence type="inferred from homology"/>
<dbReference type="EMBL" id="AE014074">
    <property type="protein sequence ID" value="AAM78862.1"/>
    <property type="molecule type" value="Genomic_DNA"/>
</dbReference>
<dbReference type="RefSeq" id="WP_002990993.1">
    <property type="nucleotide sequence ID" value="NC_004070.1"/>
</dbReference>
<dbReference type="SMR" id="P0DB46"/>
<dbReference type="GeneID" id="69901372"/>
<dbReference type="KEGG" id="spg:SpyM3_0255"/>
<dbReference type="HOGENOM" id="CLU_101379_2_1_9"/>
<dbReference type="Proteomes" id="UP000000564">
    <property type="component" value="Chromosome"/>
</dbReference>
<dbReference type="GO" id="GO:0003677">
    <property type="term" value="F:DNA binding"/>
    <property type="evidence" value="ECO:0007669"/>
    <property type="project" value="UniProtKB-UniRule"/>
</dbReference>
<dbReference type="GO" id="GO:0070063">
    <property type="term" value="F:RNA polymerase binding"/>
    <property type="evidence" value="ECO:0007669"/>
    <property type="project" value="InterPro"/>
</dbReference>
<dbReference type="GO" id="GO:0006354">
    <property type="term" value="P:DNA-templated transcription elongation"/>
    <property type="evidence" value="ECO:0007669"/>
    <property type="project" value="TreeGrafter"/>
</dbReference>
<dbReference type="GO" id="GO:0032784">
    <property type="term" value="P:regulation of DNA-templated transcription elongation"/>
    <property type="evidence" value="ECO:0007669"/>
    <property type="project" value="UniProtKB-UniRule"/>
</dbReference>
<dbReference type="FunFam" id="1.10.287.180:FF:000001">
    <property type="entry name" value="Transcription elongation factor GreA"/>
    <property type="match status" value="1"/>
</dbReference>
<dbReference type="FunFam" id="3.10.50.30:FF:000001">
    <property type="entry name" value="Transcription elongation factor GreA"/>
    <property type="match status" value="1"/>
</dbReference>
<dbReference type="Gene3D" id="3.10.50.30">
    <property type="entry name" value="Transcription elongation factor, GreA/GreB, C-terminal domain"/>
    <property type="match status" value="1"/>
</dbReference>
<dbReference type="Gene3D" id="1.10.287.180">
    <property type="entry name" value="Transcription elongation factor, GreA/GreB, N-terminal domain"/>
    <property type="match status" value="1"/>
</dbReference>
<dbReference type="HAMAP" id="MF_00105">
    <property type="entry name" value="GreA_GreB"/>
    <property type="match status" value="1"/>
</dbReference>
<dbReference type="InterPro" id="IPR036953">
    <property type="entry name" value="GreA/GreB_C_sf"/>
</dbReference>
<dbReference type="InterPro" id="IPR018151">
    <property type="entry name" value="TF_GreA/GreB_CS"/>
</dbReference>
<dbReference type="InterPro" id="IPR006359">
    <property type="entry name" value="Tscrpt_elong_fac_GreA"/>
</dbReference>
<dbReference type="InterPro" id="IPR028624">
    <property type="entry name" value="Tscrpt_elong_fac_GreA/B"/>
</dbReference>
<dbReference type="InterPro" id="IPR001437">
    <property type="entry name" value="Tscrpt_elong_fac_GreA/B_C"/>
</dbReference>
<dbReference type="InterPro" id="IPR023459">
    <property type="entry name" value="Tscrpt_elong_fac_GreA/B_fam"/>
</dbReference>
<dbReference type="InterPro" id="IPR022691">
    <property type="entry name" value="Tscrpt_elong_fac_GreA/B_N"/>
</dbReference>
<dbReference type="InterPro" id="IPR036805">
    <property type="entry name" value="Tscrpt_elong_fac_GreA/B_N_sf"/>
</dbReference>
<dbReference type="NCBIfam" id="TIGR01462">
    <property type="entry name" value="greA"/>
    <property type="match status" value="1"/>
</dbReference>
<dbReference type="NCBIfam" id="NF001260">
    <property type="entry name" value="PRK00226.1-1"/>
    <property type="match status" value="1"/>
</dbReference>
<dbReference type="NCBIfam" id="NF001263">
    <property type="entry name" value="PRK00226.1-4"/>
    <property type="match status" value="1"/>
</dbReference>
<dbReference type="PANTHER" id="PTHR30437">
    <property type="entry name" value="TRANSCRIPTION ELONGATION FACTOR GREA"/>
    <property type="match status" value="1"/>
</dbReference>
<dbReference type="PANTHER" id="PTHR30437:SF4">
    <property type="entry name" value="TRANSCRIPTION ELONGATION FACTOR GREA"/>
    <property type="match status" value="1"/>
</dbReference>
<dbReference type="Pfam" id="PF01272">
    <property type="entry name" value="GreA_GreB"/>
    <property type="match status" value="1"/>
</dbReference>
<dbReference type="Pfam" id="PF03449">
    <property type="entry name" value="GreA_GreB_N"/>
    <property type="match status" value="1"/>
</dbReference>
<dbReference type="PIRSF" id="PIRSF006092">
    <property type="entry name" value="GreA_GreB"/>
    <property type="match status" value="1"/>
</dbReference>
<dbReference type="SUPFAM" id="SSF54534">
    <property type="entry name" value="FKBP-like"/>
    <property type="match status" value="1"/>
</dbReference>
<dbReference type="SUPFAM" id="SSF46557">
    <property type="entry name" value="GreA transcript cleavage protein, N-terminal domain"/>
    <property type="match status" value="1"/>
</dbReference>
<dbReference type="PROSITE" id="PS00829">
    <property type="entry name" value="GREAB_1"/>
    <property type="match status" value="1"/>
</dbReference>
<dbReference type="PROSITE" id="PS00830">
    <property type="entry name" value="GREAB_2"/>
    <property type="match status" value="1"/>
</dbReference>
<evidence type="ECO:0000255" key="1">
    <source>
        <dbReference type="HAMAP-Rule" id="MF_00105"/>
    </source>
</evidence>
<feature type="chain" id="PRO_0000176982" description="Transcription elongation factor GreA">
    <location>
        <begin position="1"/>
        <end position="160"/>
    </location>
</feature>
<feature type="coiled-coil region" evidence="1">
    <location>
        <begin position="1"/>
        <end position="71"/>
    </location>
</feature>
<accession>P0DB46</accession>
<accession>P64286</accession>
<accession>Q8K8J3</accession>
<accession>Q9A1C4</accession>
<reference key="1">
    <citation type="journal article" date="2002" name="Proc. Natl. Acad. Sci. U.S.A.">
        <title>Genome sequence of a serotype M3 strain of group A Streptococcus: phage-encoded toxins, the high-virulence phenotype, and clone emergence.</title>
        <authorList>
            <person name="Beres S.B."/>
            <person name="Sylva G.L."/>
            <person name="Barbian K.D."/>
            <person name="Lei B."/>
            <person name="Hoff J.S."/>
            <person name="Mammarella N.D."/>
            <person name="Liu M.-Y."/>
            <person name="Smoot J.C."/>
            <person name="Porcella S.F."/>
            <person name="Parkins L.D."/>
            <person name="Campbell D.S."/>
            <person name="Smith T.M."/>
            <person name="McCormick J.K."/>
            <person name="Leung D.Y.M."/>
            <person name="Schlievert P.M."/>
            <person name="Musser J.M."/>
        </authorList>
    </citation>
    <scope>NUCLEOTIDE SEQUENCE [LARGE SCALE GENOMIC DNA]</scope>
    <source>
        <strain>ATCC BAA-595 / MGAS315</strain>
    </source>
</reference>